<organism>
    <name type="scientific">Borreliella burgdorferi (strain ATCC 35210 / DSM 4680 / CIP 102532 / B31)</name>
    <name type="common">Borrelia burgdorferi</name>
    <dbReference type="NCBI Taxonomy" id="224326"/>
    <lineage>
        <taxon>Bacteria</taxon>
        <taxon>Pseudomonadati</taxon>
        <taxon>Spirochaetota</taxon>
        <taxon>Spirochaetia</taxon>
        <taxon>Spirochaetales</taxon>
        <taxon>Borreliaceae</taxon>
        <taxon>Borreliella</taxon>
    </lineage>
</organism>
<keyword id="KW-0975">Bacterial flagellum</keyword>
<keyword id="KW-1185">Reference proteome</keyword>
<name>FLGE_BORBU</name>
<proteinExistence type="inferred from homology"/>
<reference key="1">
    <citation type="submission" date="1995-12" db="EMBL/GenBank/DDBJ databases">
        <authorList>
            <person name="Dunn J.J."/>
            <person name="Butler-Loffredo L."/>
            <person name="Kieleczawa J."/>
            <person name="Medalle J."/>
            <person name="Luft B.J."/>
        </authorList>
    </citation>
    <scope>NUCLEOTIDE SEQUENCE [GENOMIC DNA]</scope>
    <source>
        <strain>ATCC 35210 / DSM 4680 / CIP 102532 / B31</strain>
    </source>
</reference>
<reference key="2">
    <citation type="submission" date="1995-07" db="EMBL/GenBank/DDBJ databases">
        <authorList>
            <person name="Old I.G."/>
        </authorList>
    </citation>
    <scope>NUCLEOTIDE SEQUENCE [GENOMIC DNA]</scope>
    <source>
        <strain>HB19</strain>
    </source>
</reference>
<reference key="3">
    <citation type="journal article" date="1997" name="Nature">
        <title>Genomic sequence of a Lyme disease spirochaete, Borrelia burgdorferi.</title>
        <authorList>
            <person name="Fraser C.M."/>
            <person name="Casjens S."/>
            <person name="Huang W.M."/>
            <person name="Sutton G.G."/>
            <person name="Clayton R.A."/>
            <person name="Lathigra R."/>
            <person name="White O."/>
            <person name="Ketchum K.A."/>
            <person name="Dodson R.J."/>
            <person name="Hickey E.K."/>
            <person name="Gwinn M.L."/>
            <person name="Dougherty B.A."/>
            <person name="Tomb J.-F."/>
            <person name="Fleischmann R.D."/>
            <person name="Richardson D.L."/>
            <person name="Peterson J.D."/>
            <person name="Kerlavage A.R."/>
            <person name="Quackenbush J."/>
            <person name="Salzberg S.L."/>
            <person name="Hanson M."/>
            <person name="van Vugt R."/>
            <person name="Palmer N."/>
            <person name="Adams M.D."/>
            <person name="Gocayne J.D."/>
            <person name="Weidman J.F."/>
            <person name="Utterback T.R."/>
            <person name="Watthey L."/>
            <person name="McDonald L.A."/>
            <person name="Artiach P."/>
            <person name="Bowman C."/>
            <person name="Garland S.A."/>
            <person name="Fujii C."/>
            <person name="Cotton M.D."/>
            <person name="Horst K."/>
            <person name="Roberts K.M."/>
            <person name="Hatch B."/>
            <person name="Smith H.O."/>
            <person name="Venter J.C."/>
        </authorList>
    </citation>
    <scope>NUCLEOTIDE SEQUENCE [LARGE SCALE GENOMIC DNA]</scope>
    <source>
        <strain>ATCC 35210 / DSM 4680 / CIP 102532 / B31</strain>
    </source>
</reference>
<reference key="4">
    <citation type="submission" date="1995-02" db="EMBL/GenBank/DDBJ databases">
        <authorList>
            <person name="Limberger R.J."/>
            <person name="Slivienski L.L."/>
        </authorList>
    </citation>
    <scope>NUCLEOTIDE SEQUENCE [GENOMIC DNA] OF 18-207</scope>
    <source>
        <strain>ATCC 35210 / DSM 4680 / CIP 102532 / B31</strain>
    </source>
</reference>
<feature type="chain" id="PRO_0000180818" description="Flagellar hook protein FlgE">
    <location>
        <begin position="1"/>
        <end position="442"/>
    </location>
</feature>
<feature type="sequence variant" description="In strain: HB19.">
    <original>R</original>
    <variation>I</variation>
    <location>
        <position position="18"/>
    </location>
</feature>
<feature type="sequence variant" description="In strain: HB19.">
    <original>D</original>
    <variation>Y</variation>
    <location>
        <position position="119"/>
    </location>
</feature>
<feature type="sequence variant" description="In strain: HB19.">
    <original>V</original>
    <variation>I</variation>
    <location>
        <position position="174"/>
    </location>
</feature>
<feature type="sequence variant" description="In strain: HB19.">
    <original>N</original>
    <variation>S</variation>
    <location>
        <position position="192"/>
    </location>
</feature>
<gene>
    <name type="primary">flgE</name>
    <name type="ordered locus">BB_0283</name>
</gene>
<accession>Q44767</accession>
<accession>Q44734</accession>
<accession>Q44899</accession>
<protein>
    <recommendedName>
        <fullName>Flagellar hook protein FlgE</fullName>
    </recommendedName>
</protein>
<comment type="subcellular location">
    <subcellularLocation>
        <location evidence="1">Bacterial flagellum basal body</location>
    </subcellularLocation>
</comment>
<comment type="similarity">
    <text evidence="2">Belongs to the flagella basal body rod proteins family.</text>
</comment>
<sequence length="442" mass="47389">MMRSLYSGVSGLQNHQTRMDVVGNNIANVNTIGFKKGRVNFQDMISQSISGASRPTDARGGTNPKQVGLGMNVASIDTIHTQGAFQSTQKASDLGVSGNGFFILKEGKNLFYTRAGAFDVDSDRHLVNPANGMRIQGWMARDLEGEKVINTASDIEDLIIPIGDKEGAKSTKNVTFACNLDKRLPLIQEGANPADIARGTWVVNKSLYDSFGNVSVLELRVVKDLNTPNLWNATVLINGEQNSNFTLGFDNEGALASLNGQPGQKGDILQIPITFNVLGANVGEVGEQQTVNLKLGTVGSYTDSITQFADSSSTKAIIQDGYGMGYMENYEIDQNGVIVGIYSNGIRRDLGKIALASFMNPGGLAKSGDTNFVETSNSGQVRIGETGLAGLGDIRSGVLEMANVDLAEQFTDMIVTQRGFQANAKTITTSDQLLQELVRLKN</sequence>
<evidence type="ECO:0000250" key="1"/>
<evidence type="ECO:0000305" key="2"/>
<dbReference type="EMBL" id="U43739">
    <property type="protein sequence ID" value="AAA85606.1"/>
    <property type="molecule type" value="Genomic_DNA"/>
</dbReference>
<dbReference type="EMBL" id="L43849">
    <property type="protein sequence ID" value="AAA87351.1"/>
    <property type="molecule type" value="Genomic_DNA"/>
</dbReference>
<dbReference type="EMBL" id="AE000783">
    <property type="protein sequence ID" value="AAC66665.1"/>
    <property type="molecule type" value="Genomic_DNA"/>
</dbReference>
<dbReference type="EMBL" id="U19712">
    <property type="protein sequence ID" value="AAA61738.1"/>
    <property type="molecule type" value="Genomic_DNA"/>
</dbReference>
<dbReference type="PIR" id="C70135">
    <property type="entry name" value="C70135"/>
</dbReference>
<dbReference type="RefSeq" id="NP_212417.1">
    <property type="nucleotide sequence ID" value="NC_001318.1"/>
</dbReference>
<dbReference type="RefSeq" id="WP_002657723.1">
    <property type="nucleotide sequence ID" value="NC_001318.1"/>
</dbReference>
<dbReference type="SMR" id="Q44767"/>
<dbReference type="STRING" id="224326.BB_0283"/>
<dbReference type="PaxDb" id="224326-BB_0283"/>
<dbReference type="EnsemblBacteria" id="AAC66665">
    <property type="protein sequence ID" value="AAC66665"/>
    <property type="gene ID" value="BB_0283"/>
</dbReference>
<dbReference type="GeneID" id="56567714"/>
<dbReference type="KEGG" id="bbu:BB_0283"/>
<dbReference type="PATRIC" id="fig|224326.49.peg.682"/>
<dbReference type="HOGENOM" id="CLU_013687_2_4_12"/>
<dbReference type="OrthoDB" id="9804559at2"/>
<dbReference type="Proteomes" id="UP000001807">
    <property type="component" value="Chromosome"/>
</dbReference>
<dbReference type="GO" id="GO:0009425">
    <property type="term" value="C:bacterial-type flagellum basal body"/>
    <property type="evidence" value="ECO:0007669"/>
    <property type="project" value="UniProtKB-SubCell"/>
</dbReference>
<dbReference type="GO" id="GO:0009424">
    <property type="term" value="C:bacterial-type flagellum hook"/>
    <property type="evidence" value="ECO:0007669"/>
    <property type="project" value="TreeGrafter"/>
</dbReference>
<dbReference type="GO" id="GO:0005829">
    <property type="term" value="C:cytosol"/>
    <property type="evidence" value="ECO:0007669"/>
    <property type="project" value="TreeGrafter"/>
</dbReference>
<dbReference type="GO" id="GO:0071978">
    <property type="term" value="P:bacterial-type flagellum-dependent swarming motility"/>
    <property type="evidence" value="ECO:0007669"/>
    <property type="project" value="TreeGrafter"/>
</dbReference>
<dbReference type="Gene3D" id="2.60.98.20">
    <property type="entry name" value="Flagellar hook protein FlgE"/>
    <property type="match status" value="1"/>
</dbReference>
<dbReference type="InterPro" id="IPR037058">
    <property type="entry name" value="Falgellar_hook_FlgE_sf"/>
</dbReference>
<dbReference type="InterPro" id="IPR001444">
    <property type="entry name" value="Flag_bb_rod_N"/>
</dbReference>
<dbReference type="InterPro" id="IPR019776">
    <property type="entry name" value="Flagellar_basal_body_rod_CS"/>
</dbReference>
<dbReference type="InterPro" id="IPR020013">
    <property type="entry name" value="Flagellar_FlgE/F/G"/>
</dbReference>
<dbReference type="InterPro" id="IPR010930">
    <property type="entry name" value="Flg_bb/hook_C_dom"/>
</dbReference>
<dbReference type="InterPro" id="IPR037925">
    <property type="entry name" value="FlgE/F/G-like"/>
</dbReference>
<dbReference type="InterPro" id="IPR011491">
    <property type="entry name" value="FlgE_D2"/>
</dbReference>
<dbReference type="InterPro" id="IPR053967">
    <property type="entry name" value="LlgE_F_G-like_D1"/>
</dbReference>
<dbReference type="NCBIfam" id="TIGR03506">
    <property type="entry name" value="FlgEFG_subfam"/>
    <property type="match status" value="1"/>
</dbReference>
<dbReference type="NCBIfam" id="NF004241">
    <property type="entry name" value="PRK05682.1-5"/>
    <property type="match status" value="1"/>
</dbReference>
<dbReference type="PANTHER" id="PTHR30435:SF1">
    <property type="entry name" value="FLAGELLAR HOOK PROTEIN FLGE"/>
    <property type="match status" value="1"/>
</dbReference>
<dbReference type="PANTHER" id="PTHR30435">
    <property type="entry name" value="FLAGELLAR PROTEIN"/>
    <property type="match status" value="1"/>
</dbReference>
<dbReference type="Pfam" id="PF00460">
    <property type="entry name" value="Flg_bb_rod"/>
    <property type="match status" value="1"/>
</dbReference>
<dbReference type="Pfam" id="PF06429">
    <property type="entry name" value="Flg_bbr_C"/>
    <property type="match status" value="1"/>
</dbReference>
<dbReference type="Pfam" id="PF07559">
    <property type="entry name" value="FlgE_D2"/>
    <property type="match status" value="1"/>
</dbReference>
<dbReference type="Pfam" id="PF22692">
    <property type="entry name" value="LlgE_F_G_D1"/>
    <property type="match status" value="1"/>
</dbReference>
<dbReference type="SUPFAM" id="SSF117143">
    <property type="entry name" value="Flagellar hook protein flgE"/>
    <property type="match status" value="1"/>
</dbReference>
<dbReference type="PROSITE" id="PS00588">
    <property type="entry name" value="FLAGELLA_BB_ROD"/>
    <property type="match status" value="1"/>
</dbReference>